<keyword id="KW-0968">Cytoplasmic vesicle</keyword>
<keyword id="KW-0256">Endoplasmic reticulum</keyword>
<keyword id="KW-0931">ER-Golgi transport</keyword>
<keyword id="KW-0472">Membrane</keyword>
<keyword id="KW-0653">Protein transport</keyword>
<keyword id="KW-1185">Reference proteome</keyword>
<keyword id="KW-0677">Repeat</keyword>
<keyword id="KW-0813">Transport</keyword>
<keyword id="KW-0853">WD repeat</keyword>
<evidence type="ECO:0000250" key="1"/>
<evidence type="ECO:0000255" key="2">
    <source>
        <dbReference type="PROSITE-ProRule" id="PRU00221"/>
    </source>
</evidence>
<evidence type="ECO:0000256" key="3">
    <source>
        <dbReference type="SAM" id="MobiDB-lite"/>
    </source>
</evidence>
<evidence type="ECO:0000305" key="4"/>
<sequence>MVRLREIPRTATFAWSPGAASPLIATGTRAGAVDVDFSNETCLELWDLGLSNDDASQELQPIAKIGTDSGFNDLAWTDSQDNSRGVIAGALENGSLDLWDADKLINGSSDAIISRMTKHSGAIKALQFNPKHSNLLATGGAKGELYISDLNNIANPYRLGSTAARADDIECLDWNKKVAHILVTGSSAGFVTVWDVKTKKESLTLNNMGRKAVSAVAWDPEKPTKLITSTPLESDPLIYVWDLRNSHAPERTLKGHESGVLSLSWCPQDPDLLLSSGKDNRTICWNPQSGQAYGEFPVVTNWTFQTRWNPHNPNFFATASFDGRISIQTIQNTRTDTAQAIADQNQSLDGEDFFAKAQTQPQVSNFSLPKAPKWLERPSSATFGFGGRVVSVGLIEKGKRASRIKITPFEVDEAVAKSTETFETALKEGDLRSICETRASQAASEEEKADWKVIEALISGNPRKGLIEYLGFQDQADEAADKLAKLGLDKEDVNGDTLTESRGSGAKKHKRLQSMFDANPEADSFLSDLAASKGAKTNNPFHIFTGSESEAEQGITRALLLGNFEKALDVALKEDRMSDAFVIAICGGQKCIEKAQEHYFSKQTGGPNYTRLLASIVGKNLWDVVYNADLSNWKEVMAALCTFADDKEFADLCEALGDRLGEQIRSTDDKALRKDASFCFLAGSKLEKVVAMWIEELRENEQKGIETAADDTSFSIHVRALQGLIEKVTIFRQATNFQDTERTKEADWKLAMLYDKYIEYADVVATHGRLQVAQKYLDLVPEKHPEAEIARNRIKLAMRQAAPQRTQSTVPAARTTLNRPLPQINAYPPQPTFSSPAPPAPQNPYAPPTAAPSQPANPYAPPAAAPSQPSNPYAPPTAAAAIPQPQVNNPYAPIGGGGYTPAGYQPPQAPAYGVQSLGGGSVPPPPRASNQSPAVTTYTTATNLPAWNDLPEGFTKPPTSRRGTPATAAAAISSPFPNQSPTFSQGPPPPGMPPTQRAPSVPPPPKGTVPPPRVTSPPTGFTPASNLSAPPPAANPYASLPQSPPIGSTMGIPAPASIPRGPSPYNAAPTMPPPSNRYAPSPAVQAASPQLATRAAVPPPPPAAASPYAPQPAAQPPVASSYAPSTPPPSQLPMQQGPPQGPPSRPGTASSQRKAAPAPPKYPPGDRSHIPADAMPIFEILSADMQRVKTRAPSSFKAQVDDAERRLNILFDHLNNEDLLRPNTIADMAELARAIQARDYETAKTIHIDIMTNRTDECGNWMVGVKRLISMSRATP</sequence>
<protein>
    <recommendedName>
        <fullName>Protein transport protein sec31</fullName>
    </recommendedName>
</protein>
<feature type="chain" id="PRO_0000295428" description="Protein transport protein sec31">
    <location>
        <begin position="1"/>
        <end position="1276"/>
    </location>
</feature>
<feature type="repeat" description="WD 1">
    <location>
        <begin position="5"/>
        <end position="47"/>
    </location>
</feature>
<feature type="repeat" description="WD 2">
    <location>
        <begin position="66"/>
        <end position="109"/>
    </location>
</feature>
<feature type="repeat" description="WD 3">
    <location>
        <begin position="118"/>
        <end position="158"/>
    </location>
</feature>
<feature type="repeat" description="WD 4">
    <location>
        <begin position="164"/>
        <end position="204"/>
    </location>
</feature>
<feature type="repeat" description="WD 5">
    <location>
        <begin position="208"/>
        <end position="251"/>
    </location>
</feature>
<feature type="repeat" description="WD 6">
    <location>
        <begin position="255"/>
        <end position="295"/>
    </location>
</feature>
<feature type="repeat" description="WD 7">
    <location>
        <begin position="298"/>
        <end position="338"/>
    </location>
</feature>
<feature type="repeat" description="WD 8; interaction with sec13" evidence="2">
    <location>
        <begin position="382"/>
        <end position="407"/>
    </location>
</feature>
<feature type="region of interest" description="Disordered" evidence="3">
    <location>
        <begin position="820"/>
        <end position="885"/>
    </location>
</feature>
<feature type="region of interest" description="Disordered" evidence="3">
    <location>
        <begin position="906"/>
        <end position="1171"/>
    </location>
</feature>
<feature type="compositionally biased region" description="Pro residues" evidence="3">
    <location>
        <begin position="828"/>
        <end position="850"/>
    </location>
</feature>
<feature type="compositionally biased region" description="Low complexity" evidence="3">
    <location>
        <begin position="865"/>
        <end position="885"/>
    </location>
</feature>
<feature type="compositionally biased region" description="Polar residues" evidence="3">
    <location>
        <begin position="928"/>
        <end position="945"/>
    </location>
</feature>
<feature type="compositionally biased region" description="Low complexity" evidence="3">
    <location>
        <begin position="957"/>
        <end position="985"/>
    </location>
</feature>
<feature type="compositionally biased region" description="Pro residues" evidence="3">
    <location>
        <begin position="1000"/>
        <end position="1015"/>
    </location>
</feature>
<feature type="compositionally biased region" description="Low complexity" evidence="3">
    <location>
        <begin position="1016"/>
        <end position="1028"/>
    </location>
</feature>
<feature type="compositionally biased region" description="Low complexity" evidence="3">
    <location>
        <begin position="1079"/>
        <end position="1096"/>
    </location>
</feature>
<feature type="compositionally biased region" description="Pro residues" evidence="3">
    <location>
        <begin position="1097"/>
        <end position="1115"/>
    </location>
</feature>
<dbReference type="EMBL" id="DS027045">
    <property type="protein sequence ID" value="EAW14146.1"/>
    <property type="molecule type" value="Genomic_DNA"/>
</dbReference>
<dbReference type="RefSeq" id="XP_001275572.1">
    <property type="nucleotide sequence ID" value="XM_001275571.1"/>
</dbReference>
<dbReference type="SMR" id="A1C6X5"/>
<dbReference type="STRING" id="344612.A1C6X5"/>
<dbReference type="EnsemblFungi" id="EAW14146">
    <property type="protein sequence ID" value="EAW14146"/>
    <property type="gene ID" value="ACLA_071790"/>
</dbReference>
<dbReference type="GeneID" id="4708309"/>
<dbReference type="KEGG" id="act:ACLA_071790"/>
<dbReference type="VEuPathDB" id="FungiDB:ACLA_071790"/>
<dbReference type="eggNOG" id="KOG0307">
    <property type="taxonomic scope" value="Eukaryota"/>
</dbReference>
<dbReference type="HOGENOM" id="CLU_003033_2_0_1"/>
<dbReference type="OMA" id="WLERPCG"/>
<dbReference type="OrthoDB" id="542917at2759"/>
<dbReference type="Proteomes" id="UP000006701">
    <property type="component" value="Unassembled WGS sequence"/>
</dbReference>
<dbReference type="GO" id="GO:0030127">
    <property type="term" value="C:COPII vesicle coat"/>
    <property type="evidence" value="ECO:0007669"/>
    <property type="project" value="TreeGrafter"/>
</dbReference>
<dbReference type="GO" id="GO:0070971">
    <property type="term" value="C:endoplasmic reticulum exit site"/>
    <property type="evidence" value="ECO:0007669"/>
    <property type="project" value="TreeGrafter"/>
</dbReference>
<dbReference type="GO" id="GO:0005789">
    <property type="term" value="C:endoplasmic reticulum membrane"/>
    <property type="evidence" value="ECO:0007669"/>
    <property type="project" value="UniProtKB-SubCell"/>
</dbReference>
<dbReference type="GO" id="GO:0005198">
    <property type="term" value="F:structural molecule activity"/>
    <property type="evidence" value="ECO:0007669"/>
    <property type="project" value="TreeGrafter"/>
</dbReference>
<dbReference type="GO" id="GO:0090110">
    <property type="term" value="P:COPII-coated vesicle cargo loading"/>
    <property type="evidence" value="ECO:0007669"/>
    <property type="project" value="TreeGrafter"/>
</dbReference>
<dbReference type="GO" id="GO:0007029">
    <property type="term" value="P:endoplasmic reticulum organization"/>
    <property type="evidence" value="ECO:0007669"/>
    <property type="project" value="TreeGrafter"/>
</dbReference>
<dbReference type="GO" id="GO:0015031">
    <property type="term" value="P:protein transport"/>
    <property type="evidence" value="ECO:0007669"/>
    <property type="project" value="UniProtKB-KW"/>
</dbReference>
<dbReference type="FunFam" id="1.20.940.10:FF:000007">
    <property type="entry name" value="Protein transport protein (SEC31), putative"/>
    <property type="match status" value="1"/>
</dbReference>
<dbReference type="FunFam" id="2.130.10.10:FF:000193">
    <property type="entry name" value="Protein transport protein SEC31, putative"/>
    <property type="match status" value="1"/>
</dbReference>
<dbReference type="Gene3D" id="1.25.40.1030">
    <property type="match status" value="1"/>
</dbReference>
<dbReference type="Gene3D" id="1.20.940.10">
    <property type="entry name" value="Functional domain of the splicing factor Prp18"/>
    <property type="match status" value="1"/>
</dbReference>
<dbReference type="Gene3D" id="2.130.10.10">
    <property type="entry name" value="YVTN repeat-like/Quinoprotein amine dehydrogenase"/>
    <property type="match status" value="1"/>
</dbReference>
<dbReference type="InterPro" id="IPR040251">
    <property type="entry name" value="SEC31-like"/>
</dbReference>
<dbReference type="InterPro" id="IPR009917">
    <property type="entry name" value="SRA1/Sec31"/>
</dbReference>
<dbReference type="InterPro" id="IPR015943">
    <property type="entry name" value="WD40/YVTN_repeat-like_dom_sf"/>
</dbReference>
<dbReference type="InterPro" id="IPR036322">
    <property type="entry name" value="WD40_repeat_dom_sf"/>
</dbReference>
<dbReference type="InterPro" id="IPR001680">
    <property type="entry name" value="WD40_rpt"/>
</dbReference>
<dbReference type="PANTHER" id="PTHR13923">
    <property type="entry name" value="SEC31-RELATED PROTEIN"/>
    <property type="match status" value="1"/>
</dbReference>
<dbReference type="PANTHER" id="PTHR13923:SF11">
    <property type="entry name" value="SECRETORY 31, ISOFORM D"/>
    <property type="match status" value="1"/>
</dbReference>
<dbReference type="Pfam" id="PF07304">
    <property type="entry name" value="SRA1"/>
    <property type="match status" value="1"/>
</dbReference>
<dbReference type="Pfam" id="PF00400">
    <property type="entry name" value="WD40"/>
    <property type="match status" value="1"/>
</dbReference>
<dbReference type="PRINTS" id="PR01217">
    <property type="entry name" value="PRICHEXTENSN"/>
</dbReference>
<dbReference type="SMART" id="SM00320">
    <property type="entry name" value="WD40"/>
    <property type="match status" value="6"/>
</dbReference>
<dbReference type="SUPFAM" id="SSF50978">
    <property type="entry name" value="WD40 repeat-like"/>
    <property type="match status" value="1"/>
</dbReference>
<dbReference type="PROSITE" id="PS50082">
    <property type="entry name" value="WD_REPEATS_2"/>
    <property type="match status" value="2"/>
</dbReference>
<dbReference type="PROSITE" id="PS50294">
    <property type="entry name" value="WD_REPEATS_REGION"/>
    <property type="match status" value="1"/>
</dbReference>
<organism>
    <name type="scientific">Aspergillus clavatus (strain ATCC 1007 / CBS 513.65 / DSM 816 / NCTC 3887 / NRRL 1 / QM 1276 / 107)</name>
    <dbReference type="NCBI Taxonomy" id="344612"/>
    <lineage>
        <taxon>Eukaryota</taxon>
        <taxon>Fungi</taxon>
        <taxon>Dikarya</taxon>
        <taxon>Ascomycota</taxon>
        <taxon>Pezizomycotina</taxon>
        <taxon>Eurotiomycetes</taxon>
        <taxon>Eurotiomycetidae</taxon>
        <taxon>Eurotiales</taxon>
        <taxon>Aspergillaceae</taxon>
        <taxon>Aspergillus</taxon>
        <taxon>Aspergillus subgen. Fumigati</taxon>
    </lineage>
</organism>
<proteinExistence type="inferred from homology"/>
<accession>A1C6X5</accession>
<comment type="function">
    <text evidence="1">Component of the coat protein complex II (COPII) which promotes the formation of transport vesicles from the endoplasmic reticulum (ER). The coat has two main functions, the physical deformation of the endoplasmic reticulum membrane into vesicles and the selection of cargo molecules (By similarity).</text>
</comment>
<comment type="subunit">
    <text evidence="1">The COPII coat is composed of at least 5 proteins: the sec23/24 complex, the sec13/31 complex, and the protein sar1. sec13 and sec31 make a 2:2 tetramer that forms the edge element of the COPII outer coat. The tetramer self-assembles in multiple copies to form the complete polyhedral cage. Interacts (via WD 8) with sec13 (By similarity).</text>
</comment>
<comment type="subcellular location">
    <subcellularLocation>
        <location evidence="1">Cytoplasmic vesicle</location>
        <location evidence="1">COPII-coated vesicle membrane</location>
        <topology evidence="1">Peripheral membrane protein</topology>
        <orientation evidence="1">Cytoplasmic side</orientation>
    </subcellularLocation>
    <subcellularLocation>
        <location evidence="1">Endoplasmic reticulum membrane</location>
        <topology evidence="1">Peripheral membrane protein</topology>
        <orientation evidence="1">Cytoplasmic side</orientation>
    </subcellularLocation>
</comment>
<comment type="similarity">
    <text evidence="4">Belongs to the WD repeat SEC31 family.</text>
</comment>
<name>SEC31_ASPCL</name>
<gene>
    <name type="primary">sec31</name>
    <name type="ORF">ACLA_071790</name>
</gene>
<reference key="1">
    <citation type="journal article" date="2008" name="PLoS Genet.">
        <title>Genomic islands in the pathogenic filamentous fungus Aspergillus fumigatus.</title>
        <authorList>
            <person name="Fedorova N.D."/>
            <person name="Khaldi N."/>
            <person name="Joardar V.S."/>
            <person name="Maiti R."/>
            <person name="Amedeo P."/>
            <person name="Anderson M.J."/>
            <person name="Crabtree J."/>
            <person name="Silva J.C."/>
            <person name="Badger J.H."/>
            <person name="Albarraq A."/>
            <person name="Angiuoli S."/>
            <person name="Bussey H."/>
            <person name="Bowyer P."/>
            <person name="Cotty P.J."/>
            <person name="Dyer P.S."/>
            <person name="Egan A."/>
            <person name="Galens K."/>
            <person name="Fraser-Liggett C.M."/>
            <person name="Haas B.J."/>
            <person name="Inman J.M."/>
            <person name="Kent R."/>
            <person name="Lemieux S."/>
            <person name="Malavazi I."/>
            <person name="Orvis J."/>
            <person name="Roemer T."/>
            <person name="Ronning C.M."/>
            <person name="Sundaram J.P."/>
            <person name="Sutton G."/>
            <person name="Turner G."/>
            <person name="Venter J.C."/>
            <person name="White O.R."/>
            <person name="Whitty B.R."/>
            <person name="Youngman P."/>
            <person name="Wolfe K.H."/>
            <person name="Goldman G.H."/>
            <person name="Wortman J.R."/>
            <person name="Jiang B."/>
            <person name="Denning D.W."/>
            <person name="Nierman W.C."/>
        </authorList>
    </citation>
    <scope>NUCLEOTIDE SEQUENCE [LARGE SCALE GENOMIC DNA]</scope>
    <source>
        <strain>ATCC 1007 / CBS 513.65 / DSM 816 / NCTC 3887 / NRRL 1 / QM 1276 / 107</strain>
    </source>
</reference>